<sequence length="233" mass="22774">MDPLLLIGAITAGGVLIGGGVHFVPVGGAPAAMATATGVGTGTAMLAAGAGLTGLITAAAMTGQSPLMIMAAGAVGSMLMIGITMLVGNLIYVFGVGTVPVSAKVSVDPITGMEQEKYVTPGTEGHGLPTVCFVSGIIGGALGGIGGGLIYWALNEALKTLSYGAMGAAGVAAIFAVGIFFINAVIASYNIGGTIEGFHDPKFKRIGRGIVACLIASIVAGALSTLLVYGGVF</sequence>
<name>MTRD_METTM</name>
<gene>
    <name evidence="4" type="primary">mtrD</name>
    <name type="ordered locus">MTBMA_c15460</name>
</gene>
<reference key="1">
    <citation type="journal article" date="1993" name="Eur. J. Biochem.">
        <title>Cloning, sequencing and immunological characterization of the corrinoid-containing subunit of the N5-methyltetrahydromethanopterin: coenzyme-M methyltransferase from Methanobacterium thermoautotrophicum.</title>
        <authorList>
            <person name="Stupperich E."/>
            <person name="Juza A."/>
            <person name="Hoppert M."/>
            <person name="Mayer F."/>
        </authorList>
    </citation>
    <scope>NUCLEOTIDE SEQUENCE [GENOMIC DNA]</scope>
    <source>
        <strain>ATCC BAA-927 / DSM 2133 / JCM 14651 / NBRC 100331 / OCM 82 / Marburg</strain>
    </source>
</reference>
<reference key="2">
    <citation type="journal article" date="2010" name="J. Bacteriol.">
        <title>Complete genome sequence of Methanothermobacter marburgensis, a methanoarchaeon model organism.</title>
        <authorList>
            <person name="Liesegang H."/>
            <person name="Kaster A.K."/>
            <person name="Wiezer A."/>
            <person name="Goenrich M."/>
            <person name="Wollherr A."/>
            <person name="Seedorf H."/>
            <person name="Gottschalk G."/>
            <person name="Thauer R.K."/>
        </authorList>
    </citation>
    <scope>NUCLEOTIDE SEQUENCE [LARGE SCALE GENOMIC DNA]</scope>
    <source>
        <strain>ATCC BAA-927 / DSM 2133 / JCM 14651 / NBRC 100331 / OCM 82 / Marburg</strain>
    </source>
</reference>
<reference key="3">
    <citation type="journal article" date="1993" name="Eur. J. Biochem.">
        <title>Purification and properties of N5-methyltetrahydromethanopterin:coenzyme M methyltransferase from Methanobacterium thermoautotrophicum.</title>
        <authorList>
            <person name="Gaertner P."/>
            <person name="Ecker A."/>
            <person name="Fischer R."/>
            <person name="Linder D."/>
            <person name="Fuchs G."/>
            <person name="Thauer R.K."/>
        </authorList>
    </citation>
    <scope>PROTEIN SEQUENCE OF 1-26</scope>
    <scope>FUNCTION</scope>
    <scope>CATALYTIC ACTIVITY</scope>
    <scope>BIOPHYSICOCHEMICAL PROPERTIES</scope>
    <source>
        <strain>ATCC BAA-927 / DSM 2133 / JCM 14651 / NBRC 100331 / OCM 82 / Marburg</strain>
    </source>
</reference>
<reference key="4">
    <citation type="journal article" date="1995" name="Eur. J. Biochem.">
        <title>The energy conserving N5-methyltetrahydromethanopterin:coenzyme M methyltransferase complex from Methanobacterium thermoautotrophicum is composed of eight different subunits.</title>
        <authorList>
            <person name="Harms U."/>
            <person name="Weiss D.S."/>
            <person name="Gaertner P."/>
            <person name="Linder D."/>
            <person name="Thauer R.K."/>
        </authorList>
    </citation>
    <scope>SUBUNIT</scope>
    <scope>OPERON STRUCTURE</scope>
    <source>
        <strain>ATCC BAA-927 / DSM 2133 / JCM 14651 / NBRC 100331 / OCM 82 / Marburg</strain>
    </source>
</reference>
<accession>P80183</accession>
<accession>D9PY27</accession>
<dbReference type="EC" id="7.2.1.4" evidence="3"/>
<dbReference type="EMBL" id="X73123">
    <property type="protein sequence ID" value="CAA51553.1"/>
    <property type="molecule type" value="Genomic_DNA"/>
</dbReference>
<dbReference type="EMBL" id="CP001710">
    <property type="protein sequence ID" value="ADL59125.1"/>
    <property type="molecule type" value="Genomic_DNA"/>
</dbReference>
<dbReference type="RefSeq" id="WP_013296335.1">
    <property type="nucleotide sequence ID" value="NC_014408.1"/>
</dbReference>
<dbReference type="PDB" id="8Q3V">
    <property type="method" value="EM"/>
    <property type="resolution" value="2.08 A"/>
    <property type="chains" value="D/T/d=1-233"/>
</dbReference>
<dbReference type="PDB" id="8Q54">
    <property type="method" value="EM"/>
    <property type="resolution" value="2.39 A"/>
    <property type="chains" value="D/T/d=1-233"/>
</dbReference>
<dbReference type="PDBsum" id="8Q3V"/>
<dbReference type="PDBsum" id="8Q54"/>
<dbReference type="EMDB" id="EMD-18135"/>
<dbReference type="EMDB" id="EMD-18162"/>
<dbReference type="SMR" id="P80183"/>
<dbReference type="STRING" id="79929.MTBMA_c15460"/>
<dbReference type="TCDB" id="3.C.1.1.1">
    <property type="family name" value="the na(+) transporting methyltetrahydromethanopterin:coenzyme m methyltransferase (nat-mmm) family"/>
</dbReference>
<dbReference type="PaxDb" id="79929-MTBMA_c15460"/>
<dbReference type="GeneID" id="41327321"/>
<dbReference type="GeneID" id="77400317"/>
<dbReference type="KEGG" id="mmg:MTBMA_c15460"/>
<dbReference type="PATRIC" id="fig|79929.8.peg.1499"/>
<dbReference type="HOGENOM" id="CLU_1109510_0_0_2"/>
<dbReference type="OrthoDB" id="147994at2157"/>
<dbReference type="UniPathway" id="UPA00640">
    <property type="reaction ID" value="UER00698"/>
</dbReference>
<dbReference type="Proteomes" id="UP000000345">
    <property type="component" value="Chromosome"/>
</dbReference>
<dbReference type="GO" id="GO:0005737">
    <property type="term" value="C:cytoplasm"/>
    <property type="evidence" value="ECO:0007669"/>
    <property type="project" value="InterPro"/>
</dbReference>
<dbReference type="GO" id="GO:0034708">
    <property type="term" value="C:methyltransferase complex"/>
    <property type="evidence" value="ECO:0000314"/>
    <property type="project" value="UniProtKB"/>
</dbReference>
<dbReference type="GO" id="GO:0005886">
    <property type="term" value="C:plasma membrane"/>
    <property type="evidence" value="ECO:0007669"/>
    <property type="project" value="UniProtKB-SubCell"/>
</dbReference>
<dbReference type="GO" id="GO:0012506">
    <property type="term" value="C:vesicle membrane"/>
    <property type="evidence" value="ECO:0007669"/>
    <property type="project" value="InterPro"/>
</dbReference>
<dbReference type="GO" id="GO:0030269">
    <property type="term" value="F:tetrahydromethanopterin S-methyltransferase activity"/>
    <property type="evidence" value="ECO:0007669"/>
    <property type="project" value="UniProtKB-UniRule"/>
</dbReference>
<dbReference type="GO" id="GO:0019386">
    <property type="term" value="P:methanogenesis, from carbon dioxide"/>
    <property type="evidence" value="ECO:0007669"/>
    <property type="project" value="UniProtKB-UniRule"/>
</dbReference>
<dbReference type="GO" id="GO:0032259">
    <property type="term" value="P:methylation"/>
    <property type="evidence" value="ECO:0007669"/>
    <property type="project" value="UniProtKB-KW"/>
</dbReference>
<dbReference type="GO" id="GO:0006730">
    <property type="term" value="P:one-carbon metabolic process"/>
    <property type="evidence" value="ECO:0007669"/>
    <property type="project" value="UniProtKB-UniRule"/>
</dbReference>
<dbReference type="HAMAP" id="MF_01097">
    <property type="entry name" value="MtrD"/>
    <property type="match status" value="1"/>
</dbReference>
<dbReference type="InterPro" id="IPR005779">
    <property type="entry name" value="MeTrfase_D"/>
</dbReference>
<dbReference type="NCBIfam" id="TIGR01112">
    <property type="entry name" value="mtrD"/>
    <property type="match status" value="1"/>
</dbReference>
<dbReference type="Pfam" id="PF04207">
    <property type="entry name" value="MtrD"/>
    <property type="match status" value="1"/>
</dbReference>
<dbReference type="PIRSF" id="PIRSF016552">
    <property type="entry name" value="MtrD"/>
    <property type="match status" value="1"/>
</dbReference>
<comment type="function">
    <text evidence="3">Part of a complex that catalyzes the formation of methyl-coenzyme M and tetrahydromethanopterin from coenzyme M and methyl-tetrahydromethanopterin. This is an energy-conserving, sodium-ion translocating step.</text>
</comment>
<comment type="catalytic activity">
    <reaction evidence="3">
        <text>5-methyl-5,6,7,8-tetrahydromethanopterin + coenzyme M + 2 Na(+)(in) = 5,6,7,8-tetrahydromethanopterin + methyl-coenzyme M + 2 Na(+)(out)</text>
        <dbReference type="Rhea" id="RHEA:53492"/>
        <dbReference type="ChEBI" id="CHEBI:29101"/>
        <dbReference type="ChEBI" id="CHEBI:58103"/>
        <dbReference type="ChEBI" id="CHEBI:58116"/>
        <dbReference type="ChEBI" id="CHEBI:58286"/>
        <dbReference type="ChEBI" id="CHEBI:58319"/>
        <dbReference type="EC" id="7.2.1.4"/>
    </reaction>
</comment>
<comment type="biophysicochemical properties">
    <kinetics>
        <KM evidence="3">260 uM for 5-methyl-5,6,7,8-tetrahydromethanopterin</KM>
        <KM evidence="3">60 uM for coenzyme M</KM>
        <Vmax evidence="3">11.6 umol/min/mg enzyme</Vmax>
        <text evidence="3">From other experiments a much lower Km for 5-methyl-5,6,7,8-tetrahydromethanopterin is estimated.</text>
    </kinetics>
</comment>
<comment type="pathway">
    <text>One-carbon metabolism; methanogenesis from CO(2); methyl-coenzyme M from 5,10-methylene-5,6,7,8-tetrahydromethanopterin: step 2/2.</text>
</comment>
<comment type="subunit">
    <text evidence="2">The complex is composed of 8 subunits; MtrA, MtrB, MtrC, MtrD, MtrE, MtrF, MtrG and MtrH.</text>
</comment>
<comment type="subcellular location">
    <subcellularLocation>
        <location evidence="5">Cell membrane</location>
        <topology evidence="5">Multi-pass membrane protein</topology>
    </subcellularLocation>
</comment>
<comment type="induction">
    <text evidence="6">Part of the probable mtrEDCBAFGH operon.</text>
</comment>
<comment type="similarity">
    <text evidence="5">Belongs to the MtrD family.</text>
</comment>
<organism>
    <name type="scientific">Methanothermobacter marburgensis (strain ATCC BAA-927 / DSM 2133 / JCM 14651 / NBRC 100331 / OCM 82 / Marburg)</name>
    <name type="common">Methanobacterium thermoautotrophicum</name>
    <dbReference type="NCBI Taxonomy" id="79929"/>
    <lineage>
        <taxon>Archaea</taxon>
        <taxon>Methanobacteriati</taxon>
        <taxon>Methanobacteriota</taxon>
        <taxon>Methanomada group</taxon>
        <taxon>Methanobacteria</taxon>
        <taxon>Methanobacteriales</taxon>
        <taxon>Methanobacteriaceae</taxon>
        <taxon>Methanothermobacter</taxon>
    </lineage>
</organism>
<keyword id="KW-0002">3D-structure</keyword>
<keyword id="KW-1003">Cell membrane</keyword>
<keyword id="KW-0903">Direct protein sequencing</keyword>
<keyword id="KW-0472">Membrane</keyword>
<keyword id="KW-0484">Methanogenesis</keyword>
<keyword id="KW-0489">Methyltransferase</keyword>
<keyword id="KW-0554">One-carbon metabolism</keyword>
<keyword id="KW-0808">Transferase</keyword>
<keyword id="KW-1278">Translocase</keyword>
<keyword id="KW-0812">Transmembrane</keyword>
<keyword id="KW-1133">Transmembrane helix</keyword>
<protein>
    <recommendedName>
        <fullName>Tetrahydromethanopterin S-methyltransferase subunit D</fullName>
        <ecNumber evidence="3">7.2.1.4</ecNumber>
    </recommendedName>
    <alternativeName>
        <fullName>N5-methyltetrahydromethanopterin--coenzyme M methyltransferase subunit D</fullName>
    </alternativeName>
</protein>
<evidence type="ECO:0000255" key="1"/>
<evidence type="ECO:0000269" key="2">
    <source>
    </source>
</evidence>
<evidence type="ECO:0000269" key="3">
    <source>
    </source>
</evidence>
<evidence type="ECO:0000303" key="4">
    <source>
    </source>
</evidence>
<evidence type="ECO:0000305" key="5"/>
<evidence type="ECO:0000305" key="6">
    <source>
    </source>
</evidence>
<proteinExistence type="evidence at protein level"/>
<feature type="chain" id="PRO_0000147535" description="Tetrahydromethanopterin S-methyltransferase subunit D">
    <location>
        <begin position="1"/>
        <end position="233"/>
    </location>
</feature>
<feature type="transmembrane region" description="Helical" evidence="1">
    <location>
        <begin position="4"/>
        <end position="24"/>
    </location>
</feature>
<feature type="transmembrane region" description="Helical" evidence="1">
    <location>
        <begin position="39"/>
        <end position="59"/>
    </location>
</feature>
<feature type="transmembrane region" description="Helical" evidence="1">
    <location>
        <begin position="67"/>
        <end position="87"/>
    </location>
</feature>
<feature type="transmembrane region" description="Helical" evidence="1">
    <location>
        <begin position="133"/>
        <end position="153"/>
    </location>
</feature>
<feature type="transmembrane region" description="Helical" evidence="1">
    <location>
        <begin position="166"/>
        <end position="186"/>
    </location>
</feature>
<feature type="transmembrane region" description="Helical" evidence="1">
    <location>
        <begin position="209"/>
        <end position="229"/>
    </location>
</feature>